<dbReference type="EMBL" id="CP000725">
    <property type="protein sequence ID" value="ABV10265.1"/>
    <property type="molecule type" value="Genomic_DNA"/>
</dbReference>
<dbReference type="RefSeq" id="WP_008809103.1">
    <property type="nucleotide sequence ID" value="NC_009785.1"/>
</dbReference>
<dbReference type="SMR" id="A8AW20"/>
<dbReference type="STRING" id="467705.SGO_0677"/>
<dbReference type="KEGG" id="sgo:SGO_0677"/>
<dbReference type="eggNOG" id="COG1799">
    <property type="taxonomic scope" value="Bacteria"/>
</dbReference>
<dbReference type="HOGENOM" id="CLU_078499_2_0_9"/>
<dbReference type="Proteomes" id="UP000001131">
    <property type="component" value="Chromosome"/>
</dbReference>
<dbReference type="GO" id="GO:0005737">
    <property type="term" value="C:cytoplasm"/>
    <property type="evidence" value="ECO:0007669"/>
    <property type="project" value="UniProtKB-SubCell"/>
</dbReference>
<dbReference type="GO" id="GO:0000917">
    <property type="term" value="P:division septum assembly"/>
    <property type="evidence" value="ECO:0007669"/>
    <property type="project" value="UniProtKB-KW"/>
</dbReference>
<dbReference type="GO" id="GO:0043093">
    <property type="term" value="P:FtsZ-dependent cytokinesis"/>
    <property type="evidence" value="ECO:0007669"/>
    <property type="project" value="UniProtKB-UniRule"/>
</dbReference>
<dbReference type="Gene3D" id="3.30.110.150">
    <property type="entry name" value="SepF-like protein"/>
    <property type="match status" value="1"/>
</dbReference>
<dbReference type="HAMAP" id="MF_01197">
    <property type="entry name" value="SepF"/>
    <property type="match status" value="1"/>
</dbReference>
<dbReference type="InterPro" id="IPR023052">
    <property type="entry name" value="Cell_div_SepF"/>
</dbReference>
<dbReference type="InterPro" id="IPR007561">
    <property type="entry name" value="Cell_div_SepF/SepF-rel"/>
</dbReference>
<dbReference type="InterPro" id="IPR038594">
    <property type="entry name" value="SepF-like_sf"/>
</dbReference>
<dbReference type="PANTHER" id="PTHR35798">
    <property type="entry name" value="CELL DIVISION PROTEIN SEPF"/>
    <property type="match status" value="1"/>
</dbReference>
<dbReference type="PANTHER" id="PTHR35798:SF1">
    <property type="entry name" value="CELL DIVISION PROTEIN SEPF"/>
    <property type="match status" value="1"/>
</dbReference>
<dbReference type="Pfam" id="PF04472">
    <property type="entry name" value="SepF"/>
    <property type="match status" value="1"/>
</dbReference>
<feature type="chain" id="PRO_0000334094" description="Cell division protein SepF">
    <location>
        <begin position="1"/>
        <end position="189"/>
    </location>
</feature>
<feature type="region of interest" description="Disordered" evidence="2">
    <location>
        <begin position="25"/>
        <end position="70"/>
    </location>
</feature>
<feature type="compositionally biased region" description="Polar residues" evidence="2">
    <location>
        <begin position="27"/>
        <end position="41"/>
    </location>
</feature>
<feature type="compositionally biased region" description="Polar residues" evidence="2">
    <location>
        <begin position="54"/>
        <end position="70"/>
    </location>
</feature>
<proteinExistence type="inferred from homology"/>
<gene>
    <name evidence="1" type="primary">sepF</name>
    <name type="ordered locus">SGO_0677</name>
</gene>
<accession>A8AW20</accession>
<organism>
    <name type="scientific">Streptococcus gordonii (strain Challis / ATCC 35105 / BCRC 15272 / CH1 / DL1 / V288)</name>
    <dbReference type="NCBI Taxonomy" id="467705"/>
    <lineage>
        <taxon>Bacteria</taxon>
        <taxon>Bacillati</taxon>
        <taxon>Bacillota</taxon>
        <taxon>Bacilli</taxon>
        <taxon>Lactobacillales</taxon>
        <taxon>Streptococcaceae</taxon>
        <taxon>Streptococcus</taxon>
    </lineage>
</organism>
<comment type="function">
    <text evidence="1">Cell division protein that is part of the divisome complex and is recruited early to the Z-ring. Probably stimulates Z-ring formation, perhaps through the cross-linking of FtsZ protofilaments. Its function overlaps with FtsA.</text>
</comment>
<comment type="subunit">
    <text evidence="1">Homodimer. Interacts with FtsZ.</text>
</comment>
<comment type="subcellular location">
    <subcellularLocation>
        <location evidence="1">Cytoplasm</location>
    </subcellularLocation>
    <text evidence="1">Localizes to the division site, in a FtsZ-dependent manner.</text>
</comment>
<comment type="similarity">
    <text evidence="1">Belongs to the SepF family.</text>
</comment>
<reference key="1">
    <citation type="journal article" date="2007" name="J. Bacteriol.">
        <title>Genome-wide transcriptional changes in Streptococcus gordonii in response to competence signaling peptide.</title>
        <authorList>
            <person name="Vickerman M.M."/>
            <person name="Iobst S."/>
            <person name="Jesionowski A.M."/>
            <person name="Gill S.R."/>
        </authorList>
    </citation>
    <scope>NUCLEOTIDE SEQUENCE [LARGE SCALE GENOMIC DNA]</scope>
    <source>
        <strain>Challis / ATCC 35105 / BCRC 15272 / CH1 / DL1 / V288</strain>
    </source>
</reference>
<protein>
    <recommendedName>
        <fullName evidence="1">Cell division protein SepF</fullName>
    </recommendedName>
</protein>
<keyword id="KW-0131">Cell cycle</keyword>
<keyword id="KW-0132">Cell division</keyword>
<keyword id="KW-0963">Cytoplasm</keyword>
<keyword id="KW-1185">Reference proteome</keyword>
<keyword id="KW-0717">Septation</keyword>
<evidence type="ECO:0000255" key="1">
    <source>
        <dbReference type="HAMAP-Rule" id="MF_01197"/>
    </source>
</evidence>
<evidence type="ECO:0000256" key="2">
    <source>
        <dbReference type="SAM" id="MobiDB-lite"/>
    </source>
</evidence>
<name>SEPF_STRGC</name>
<sequence length="189" mass="21610">MSLKDRFDKFIEYFTEDGDDVQVAESRVQQQAVKPSNSRPAQQEPVRDIKQPRLVSSSSQHVTNTPSSNENITRLHARQQELAQNHSVATSEKVTIDVRYPKKYEDAPAIVDLLLANESVLIDFQYMTEVQARRCIDYLDGAKQVLMGNLRRVSGTMYLLTPVNVVVNIEDIKLPDGVHSEFDFDMKRR</sequence>